<organism>
    <name type="scientific">Syntrophobacter fumaroxidans (strain DSM 10017 / MPOB)</name>
    <dbReference type="NCBI Taxonomy" id="335543"/>
    <lineage>
        <taxon>Bacteria</taxon>
        <taxon>Pseudomonadati</taxon>
        <taxon>Thermodesulfobacteriota</taxon>
        <taxon>Syntrophobacteria</taxon>
        <taxon>Syntrophobacterales</taxon>
        <taxon>Syntrophobacteraceae</taxon>
        <taxon>Syntrophobacter</taxon>
    </lineage>
</organism>
<keyword id="KW-0067">ATP-binding</keyword>
<keyword id="KW-0436">Ligase</keyword>
<keyword id="KW-0547">Nucleotide-binding</keyword>
<keyword id="KW-0554">One-carbon metabolism</keyword>
<keyword id="KW-1185">Reference proteome</keyword>
<evidence type="ECO:0000255" key="1">
    <source>
        <dbReference type="HAMAP-Rule" id="MF_01543"/>
    </source>
</evidence>
<proteinExistence type="inferred from homology"/>
<sequence>MPYDATKMMDWQISEEAEKDMPSPWQWQEKLGLLKEEILPMGRLCKLDFLKIMNRLKDKPDGKYIEVTAITPTPLGEGKSTTSVGLMEGLGKRGVNVGGCLRQPSGGPTMNIKGTAAGGGNALLIPMTEFSMGLTGDINDIMNAHNLAMVALTARMQHERNYTDEQLDRLTKMRRLHIDPTRVEMGWIMDFCAQALRNIIIGIGGRQDGYMMQSKFGIAVSSELMAILSIVKDLPDLRKRLNEITVAFDRRGNPVTTGDLEVGGAMTAFMRNTINPTLMCTAEYQPCMVHAGPFANIAVGQSSIIADRIGLKMFDYHVTESGFAADIGFEKFWNVKCRYSGLKPHVSVLTTTIRALKMHGGGPKVVAGLAMPEEYTKENLKLLEKGIVNMVHHINTIRKSGMNPVVCINAFHTDTKDEIALVRKHAEAAGARCALSEHWAKGGEGALEFADAVIDACKQESQFKFLYPLEMKLRDRVSTVAREVYGADGVSWTPDAEAKAKMLENDPKYDDYATMMVKTHLSLTHDPSVKGVPKGWVLPIRDVLIYSGAKFLCPCAGTISLMPGTSSNPAFRRIDVDVNTGKVKGLF</sequence>
<comment type="catalytic activity">
    <reaction evidence="1">
        <text>(6S)-5,6,7,8-tetrahydrofolate + formate + ATP = (6R)-10-formyltetrahydrofolate + ADP + phosphate</text>
        <dbReference type="Rhea" id="RHEA:20221"/>
        <dbReference type="ChEBI" id="CHEBI:15740"/>
        <dbReference type="ChEBI" id="CHEBI:30616"/>
        <dbReference type="ChEBI" id="CHEBI:43474"/>
        <dbReference type="ChEBI" id="CHEBI:57453"/>
        <dbReference type="ChEBI" id="CHEBI:195366"/>
        <dbReference type="ChEBI" id="CHEBI:456216"/>
        <dbReference type="EC" id="6.3.4.3"/>
    </reaction>
</comment>
<comment type="pathway">
    <text evidence="1">One-carbon metabolism; tetrahydrofolate interconversion.</text>
</comment>
<comment type="similarity">
    <text evidence="1">Belongs to the formate--tetrahydrofolate ligase family.</text>
</comment>
<dbReference type="EC" id="6.3.4.3" evidence="1"/>
<dbReference type="EMBL" id="CP000478">
    <property type="protein sequence ID" value="ABK18365.1"/>
    <property type="molecule type" value="Genomic_DNA"/>
</dbReference>
<dbReference type="RefSeq" id="WP_011699532.1">
    <property type="nucleotide sequence ID" value="NC_008554.1"/>
</dbReference>
<dbReference type="SMR" id="A0LLR3"/>
<dbReference type="STRING" id="335543.Sfum_2687"/>
<dbReference type="KEGG" id="sfu:Sfum_2687"/>
<dbReference type="eggNOG" id="COG2759">
    <property type="taxonomic scope" value="Bacteria"/>
</dbReference>
<dbReference type="HOGENOM" id="CLU_003601_3_3_7"/>
<dbReference type="InParanoid" id="A0LLR3"/>
<dbReference type="OrthoDB" id="9761733at2"/>
<dbReference type="UniPathway" id="UPA00193"/>
<dbReference type="Proteomes" id="UP000001784">
    <property type="component" value="Chromosome"/>
</dbReference>
<dbReference type="GO" id="GO:0005524">
    <property type="term" value="F:ATP binding"/>
    <property type="evidence" value="ECO:0007669"/>
    <property type="project" value="UniProtKB-UniRule"/>
</dbReference>
<dbReference type="GO" id="GO:0004329">
    <property type="term" value="F:formate-tetrahydrofolate ligase activity"/>
    <property type="evidence" value="ECO:0007669"/>
    <property type="project" value="UniProtKB-UniRule"/>
</dbReference>
<dbReference type="GO" id="GO:0035999">
    <property type="term" value="P:tetrahydrofolate interconversion"/>
    <property type="evidence" value="ECO:0007669"/>
    <property type="project" value="UniProtKB-UniRule"/>
</dbReference>
<dbReference type="CDD" id="cd00477">
    <property type="entry name" value="FTHFS"/>
    <property type="match status" value="1"/>
</dbReference>
<dbReference type="Gene3D" id="3.30.1510.10">
    <property type="entry name" value="Domain 2, N(10)-formyltetrahydrofolate synthetase"/>
    <property type="match status" value="1"/>
</dbReference>
<dbReference type="Gene3D" id="3.10.410.10">
    <property type="entry name" value="Formyltetrahydrofolate synthetase, domain 3"/>
    <property type="match status" value="1"/>
</dbReference>
<dbReference type="Gene3D" id="3.40.50.300">
    <property type="entry name" value="P-loop containing nucleotide triphosphate hydrolases"/>
    <property type="match status" value="1"/>
</dbReference>
<dbReference type="HAMAP" id="MF_01543">
    <property type="entry name" value="FTHFS"/>
    <property type="match status" value="1"/>
</dbReference>
<dbReference type="InterPro" id="IPR000559">
    <property type="entry name" value="Formate_THF_ligase"/>
</dbReference>
<dbReference type="InterPro" id="IPR027417">
    <property type="entry name" value="P-loop_NTPase"/>
</dbReference>
<dbReference type="NCBIfam" id="NF010032">
    <property type="entry name" value="PRK13507.1"/>
    <property type="match status" value="1"/>
</dbReference>
<dbReference type="Pfam" id="PF01268">
    <property type="entry name" value="FTHFS"/>
    <property type="match status" value="1"/>
</dbReference>
<dbReference type="SUPFAM" id="SSF52540">
    <property type="entry name" value="P-loop containing nucleoside triphosphate hydrolases"/>
    <property type="match status" value="1"/>
</dbReference>
<name>FTHS_SYNFM</name>
<protein>
    <recommendedName>
        <fullName evidence="1">Formate--tetrahydrofolate ligase</fullName>
        <ecNumber evidence="1">6.3.4.3</ecNumber>
    </recommendedName>
    <alternativeName>
        <fullName evidence="1">Formyltetrahydrofolate synthetase</fullName>
        <shortName evidence="1">FHS</shortName>
        <shortName evidence="1">FTHFS</shortName>
    </alternativeName>
</protein>
<reference key="1">
    <citation type="submission" date="2006-10" db="EMBL/GenBank/DDBJ databases">
        <title>Complete sequence of Syntrophobacter fumaroxidans MPOB.</title>
        <authorList>
            <consortium name="US DOE Joint Genome Institute"/>
            <person name="Copeland A."/>
            <person name="Lucas S."/>
            <person name="Lapidus A."/>
            <person name="Barry K."/>
            <person name="Detter J.C."/>
            <person name="Glavina del Rio T."/>
            <person name="Hammon N."/>
            <person name="Israni S."/>
            <person name="Pitluck S."/>
            <person name="Goltsman E.G."/>
            <person name="Martinez M."/>
            <person name="Schmutz J."/>
            <person name="Larimer F."/>
            <person name="Land M."/>
            <person name="Hauser L."/>
            <person name="Kyrpides N."/>
            <person name="Kim E."/>
            <person name="Boone D.R."/>
            <person name="Brockman F."/>
            <person name="Culley D."/>
            <person name="Ferry J."/>
            <person name="Gunsalus R."/>
            <person name="McInerney M.J."/>
            <person name="Morrison M."/>
            <person name="Plugge C."/>
            <person name="Rohlin L."/>
            <person name="Scholten J."/>
            <person name="Sieber J."/>
            <person name="Stams A.J.M."/>
            <person name="Worm P."/>
            <person name="Henstra A.M."/>
            <person name="Richardson P."/>
        </authorList>
    </citation>
    <scope>NUCLEOTIDE SEQUENCE [LARGE SCALE GENOMIC DNA]</scope>
    <source>
        <strain>DSM 10017 / MPOB</strain>
    </source>
</reference>
<gene>
    <name evidence="1" type="primary">fhs</name>
    <name type="ordered locus">Sfum_2687</name>
</gene>
<feature type="chain" id="PRO_0000293071" description="Formate--tetrahydrofolate ligase">
    <location>
        <begin position="1"/>
        <end position="587"/>
    </location>
</feature>
<feature type="binding site" evidence="1">
    <location>
        <begin position="73"/>
        <end position="80"/>
    </location>
    <ligand>
        <name>ATP</name>
        <dbReference type="ChEBI" id="CHEBI:30616"/>
    </ligand>
</feature>
<accession>A0LLR3</accession>